<protein>
    <recommendedName>
        <fullName>Protein TonB</fullName>
    </recommendedName>
</protein>
<proteinExistence type="inferred from homology"/>
<comment type="function">
    <text evidence="1">Interacts with outer membrane receptor proteins that carry out high-affinity binding and energy dependent uptake into the periplasmic space of specific substrates. It could act to transduce energy from the cytoplasmic membrane to specific energy-requiring processes in the outer membrane, resulting in the release into the periplasm of ligands bound by these outer membrane proteins (By similarity).</text>
</comment>
<comment type="subunit">
    <text evidence="1">Homodimer. Forms a complex with the accessory proteins ExbB and ExbD (By similarity).</text>
</comment>
<comment type="subcellular location">
    <subcellularLocation>
        <location>Cell inner membrane</location>
        <topology>Single-pass membrane protein</topology>
        <orientation>Periplasmic side</orientation>
    </subcellularLocation>
</comment>
<comment type="similarity">
    <text evidence="5">Belongs to the TonB family.</text>
</comment>
<keyword id="KW-0997">Cell inner membrane</keyword>
<keyword id="KW-1003">Cell membrane</keyword>
<keyword id="KW-0472">Membrane</keyword>
<keyword id="KW-0653">Protein transport</keyword>
<keyword id="KW-0677">Repeat</keyword>
<keyword id="KW-0735">Signal-anchor</keyword>
<keyword id="KW-0812">Transmembrane</keyword>
<keyword id="KW-1133">Transmembrane helix</keyword>
<keyword id="KW-0813">Transport</keyword>
<reference key="1">
    <citation type="journal article" date="1993" name="Mol. Gen. Genet.">
        <title>The TonB protein of Yersinia enterocolitica and its interactions with TonB-box proteins.</title>
        <authorList>
            <person name="Koebnik R."/>
            <person name="Baeumler A.J."/>
            <person name="Heesemann J."/>
            <person name="Braun V."/>
            <person name="Hantke K."/>
        </authorList>
    </citation>
    <scope>NUCLEOTIDE SEQUENCE [GENOMIC DNA]</scope>
</reference>
<evidence type="ECO:0000250" key="1"/>
<evidence type="ECO:0000255" key="2"/>
<evidence type="ECO:0000255" key="3">
    <source>
        <dbReference type="PROSITE-ProRule" id="PRU01359"/>
    </source>
</evidence>
<evidence type="ECO:0000256" key="4">
    <source>
        <dbReference type="SAM" id="MobiDB-lite"/>
    </source>
</evidence>
<evidence type="ECO:0000305" key="5"/>
<name>TONB_YEREN</name>
<organism>
    <name type="scientific">Yersinia enterocolitica</name>
    <dbReference type="NCBI Taxonomy" id="630"/>
    <lineage>
        <taxon>Bacteria</taxon>
        <taxon>Pseudomonadati</taxon>
        <taxon>Pseudomonadota</taxon>
        <taxon>Gammaproteobacteria</taxon>
        <taxon>Enterobacterales</taxon>
        <taxon>Yersiniaceae</taxon>
        <taxon>Yersinia</taxon>
    </lineage>
</organism>
<dbReference type="EMBL" id="X67332">
    <property type="protein sequence ID" value="CAA47747.1"/>
    <property type="molecule type" value="Genomic_DNA"/>
</dbReference>
<dbReference type="PIR" id="S30290">
    <property type="entry name" value="S30290"/>
</dbReference>
<dbReference type="RefSeq" id="WP_032905087.1">
    <property type="nucleotide sequence ID" value="NZ_JAHSRD010000017.1"/>
</dbReference>
<dbReference type="SMR" id="Q05740"/>
<dbReference type="STRING" id="1443113.LC20_02563"/>
<dbReference type="eggNOG" id="COG0810">
    <property type="taxonomic scope" value="Bacteria"/>
</dbReference>
<dbReference type="GO" id="GO:0030288">
    <property type="term" value="C:outer membrane-bounded periplasmic space"/>
    <property type="evidence" value="ECO:0007669"/>
    <property type="project" value="InterPro"/>
</dbReference>
<dbReference type="GO" id="GO:0098797">
    <property type="term" value="C:plasma membrane protein complex"/>
    <property type="evidence" value="ECO:0007669"/>
    <property type="project" value="TreeGrafter"/>
</dbReference>
<dbReference type="GO" id="GO:0031992">
    <property type="term" value="F:energy transducer activity"/>
    <property type="evidence" value="ECO:0007669"/>
    <property type="project" value="InterPro"/>
</dbReference>
<dbReference type="GO" id="GO:0015031">
    <property type="term" value="P:protein transport"/>
    <property type="evidence" value="ECO:0007669"/>
    <property type="project" value="UniProtKB-KW"/>
</dbReference>
<dbReference type="GO" id="GO:0015891">
    <property type="term" value="P:siderophore transport"/>
    <property type="evidence" value="ECO:0007669"/>
    <property type="project" value="InterPro"/>
</dbReference>
<dbReference type="GO" id="GO:0055085">
    <property type="term" value="P:transmembrane transport"/>
    <property type="evidence" value="ECO:0007669"/>
    <property type="project" value="InterPro"/>
</dbReference>
<dbReference type="Gene3D" id="3.30.2420.10">
    <property type="entry name" value="TonB"/>
    <property type="match status" value="1"/>
</dbReference>
<dbReference type="InterPro" id="IPR003538">
    <property type="entry name" value="TonB"/>
</dbReference>
<dbReference type="InterPro" id="IPR051045">
    <property type="entry name" value="TonB-dependent_transducer"/>
</dbReference>
<dbReference type="InterPro" id="IPR006260">
    <property type="entry name" value="TonB/TolA_C"/>
</dbReference>
<dbReference type="InterPro" id="IPR037682">
    <property type="entry name" value="TonB_C"/>
</dbReference>
<dbReference type="InterPro" id="IPR049924">
    <property type="entry name" value="TonB_pro-rich"/>
</dbReference>
<dbReference type="NCBIfam" id="NF008080">
    <property type="entry name" value="PRK10819.1-1"/>
    <property type="match status" value="1"/>
</dbReference>
<dbReference type="NCBIfam" id="TIGR01352">
    <property type="entry name" value="tonB_Cterm"/>
    <property type="match status" value="1"/>
</dbReference>
<dbReference type="PANTHER" id="PTHR33446:SF8">
    <property type="entry name" value="PROTEIN TONB"/>
    <property type="match status" value="1"/>
</dbReference>
<dbReference type="PANTHER" id="PTHR33446">
    <property type="entry name" value="PROTEIN TONB-RELATED"/>
    <property type="match status" value="1"/>
</dbReference>
<dbReference type="Pfam" id="PF03544">
    <property type="entry name" value="TonB_C"/>
    <property type="match status" value="1"/>
</dbReference>
<dbReference type="Pfam" id="PF16031">
    <property type="entry name" value="TonB_N"/>
    <property type="match status" value="1"/>
</dbReference>
<dbReference type="PRINTS" id="PR01374">
    <property type="entry name" value="TONBPROTEIN"/>
</dbReference>
<dbReference type="SUPFAM" id="SSF74653">
    <property type="entry name" value="TolA/TonB C-terminal domain"/>
    <property type="match status" value="1"/>
</dbReference>
<dbReference type="PROSITE" id="PS52015">
    <property type="entry name" value="TONB_CTD"/>
    <property type="match status" value="1"/>
</dbReference>
<feature type="chain" id="PRO_0000196213" description="Protein TonB">
    <location>
        <begin position="1"/>
        <end position="255"/>
    </location>
</feature>
<feature type="topological domain" description="Cytoplasmic" evidence="2">
    <location>
        <begin position="1"/>
        <end position="10"/>
    </location>
</feature>
<feature type="transmembrane region" description="Helical; Signal-anchor" evidence="2">
    <location>
        <begin position="11"/>
        <end position="33"/>
    </location>
</feature>
<feature type="topological domain" description="Periplasmic" evidence="2">
    <location>
        <begin position="34"/>
        <end position="255"/>
    </location>
</feature>
<feature type="repeat" description="1-1">
    <location>
        <begin position="72"/>
        <end position="73"/>
    </location>
</feature>
<feature type="repeat" description="1-2">
    <location>
        <begin position="74"/>
        <end position="75"/>
    </location>
</feature>
<feature type="repeat" description="1-3">
    <location>
        <begin position="76"/>
        <end position="77"/>
    </location>
</feature>
<feature type="repeat" description="1-4">
    <location>
        <begin position="78"/>
        <end position="79"/>
    </location>
</feature>
<feature type="repeat" description="1-5">
    <location>
        <begin position="80"/>
        <end position="81"/>
    </location>
</feature>
<feature type="repeat" description="1-6">
    <location>
        <begin position="82"/>
        <end position="83"/>
    </location>
</feature>
<feature type="repeat" description="2-1">
    <location>
        <begin position="94"/>
        <end position="95"/>
    </location>
</feature>
<feature type="repeat" description="2-2">
    <location>
        <begin position="96"/>
        <end position="97"/>
    </location>
</feature>
<feature type="repeat" description="2-3">
    <location>
        <begin position="98"/>
        <end position="99"/>
    </location>
</feature>
<feature type="repeat" description="2-4">
    <location>
        <begin position="100"/>
        <end position="101"/>
    </location>
</feature>
<feature type="repeat" description="2-5">
    <location>
        <begin position="102"/>
        <end position="103"/>
    </location>
</feature>
<feature type="repeat" description="2-6">
    <location>
        <begin position="104"/>
        <end position="105"/>
    </location>
</feature>
<feature type="repeat" description="3-1">
    <location>
        <begin position="107"/>
        <end position="108"/>
    </location>
</feature>
<feature type="repeat" description="3-2">
    <location>
        <begin position="109"/>
        <end position="110"/>
    </location>
</feature>
<feature type="repeat" description="3-3">
    <location>
        <begin position="111"/>
        <end position="112"/>
    </location>
</feature>
<feature type="domain" description="TonB C-terminal" evidence="3">
    <location>
        <begin position="165"/>
        <end position="255"/>
    </location>
</feature>
<feature type="region of interest" description="Disordered" evidence="4">
    <location>
        <begin position="63"/>
        <end position="175"/>
    </location>
</feature>
<feature type="region of interest" description="6 X 2 AA tandem repeats of E-P">
    <location>
        <begin position="72"/>
        <end position="83"/>
    </location>
</feature>
<feature type="region of interest" description="6 X 2 AA tandem repeats of [LEIV]-P">
    <location>
        <begin position="94"/>
        <end position="105"/>
    </location>
</feature>
<feature type="region of interest" description="3 X 2 AA tandem repeats of K-P">
    <location>
        <begin position="107"/>
        <end position="112"/>
    </location>
</feature>
<feature type="compositionally biased region" description="Acidic residues" evidence="4">
    <location>
        <begin position="71"/>
        <end position="89"/>
    </location>
</feature>
<feature type="compositionally biased region" description="Pro residues" evidence="4">
    <location>
        <begin position="90"/>
        <end position="105"/>
    </location>
</feature>
<feature type="compositionally biased region" description="Basic and acidic residues" evidence="4">
    <location>
        <begin position="113"/>
        <end position="143"/>
    </location>
</feature>
<gene>
    <name type="primary">tonB</name>
</gene>
<sequence>MQLNKFFLGRWLTWPLAFSVGIHGSVIAALLYVSVEQMRIQPEIEDAPIAVTMVNIDTFAAPQPAAAEPQAEPEPEPEPEPEPIDEAPPEPEVLPEPVPVPIPEPVKPKPKPVKKEVKKPEVKKPDVKKTVAPPDDKPFKSDEPALVSTNAPVKSAPKASVPGVSTSTGPKALSKAKPTYPARALALGVEGQVKVQYDIDENGRVTNVRILEATPRNTFEREVKQVMRKWRFEAVAAKDYVTTVVFKIGGTTEMD</sequence>
<accession>Q05740</accession>